<accession>P61639</accession>
<gene>
    <name type="primary">COX7C</name>
</gene>
<evidence type="ECO:0000250" key="1">
    <source>
        <dbReference type="UniProtKB" id="P00430"/>
    </source>
</evidence>
<evidence type="ECO:0000250" key="2">
    <source>
        <dbReference type="UniProtKB" id="P04039"/>
    </source>
</evidence>
<evidence type="ECO:0000250" key="3">
    <source>
        <dbReference type="UniProtKB" id="P15954"/>
    </source>
</evidence>
<evidence type="ECO:0000250" key="4">
    <source>
        <dbReference type="UniProtKB" id="P17665"/>
    </source>
</evidence>
<evidence type="ECO:0000305" key="5"/>
<dbReference type="EMBL" id="AB072315">
    <property type="protein sequence ID" value="BAB86872.1"/>
    <property type="molecule type" value="Genomic_DNA"/>
</dbReference>
<dbReference type="SMR" id="P61639"/>
<dbReference type="STRING" id="9597.ENSPPAP00000021481"/>
<dbReference type="Ensembl" id="ENSPPAT00000044283.1">
    <property type="protein sequence ID" value="ENSPPAP00000021481.1"/>
    <property type="gene ID" value="ENSPPAG00000033965.1"/>
</dbReference>
<dbReference type="GeneID" id="100979972"/>
<dbReference type="KEGG" id="pps:100979972"/>
<dbReference type="eggNOG" id="KOG4527">
    <property type="taxonomic scope" value="Eukaryota"/>
</dbReference>
<dbReference type="GeneTree" id="ENSGT00390000018086"/>
<dbReference type="OMA" id="SIENKWR"/>
<dbReference type="OrthoDB" id="677at9604"/>
<dbReference type="UniPathway" id="UPA00705"/>
<dbReference type="Proteomes" id="UP000240080">
    <property type="component" value="Chromosome 5"/>
</dbReference>
<dbReference type="Bgee" id="ENSPPAG00000033965">
    <property type="expression patterns" value="Expressed in heart and 6 other cell types or tissues"/>
</dbReference>
<dbReference type="GO" id="GO:0005743">
    <property type="term" value="C:mitochondrial inner membrane"/>
    <property type="evidence" value="ECO:0007669"/>
    <property type="project" value="UniProtKB-SubCell"/>
</dbReference>
<dbReference type="GO" id="GO:0045277">
    <property type="term" value="C:respiratory chain complex IV"/>
    <property type="evidence" value="ECO:0007669"/>
    <property type="project" value="InterPro"/>
</dbReference>
<dbReference type="GO" id="GO:0006123">
    <property type="term" value="P:mitochondrial electron transport, cytochrome c to oxygen"/>
    <property type="evidence" value="ECO:0007669"/>
    <property type="project" value="InterPro"/>
</dbReference>
<dbReference type="CDD" id="cd00929">
    <property type="entry name" value="Cyt_c_Oxidase_VIIc"/>
    <property type="match status" value="1"/>
</dbReference>
<dbReference type="FunFam" id="4.10.49.10:FF:000001">
    <property type="entry name" value="Cytochrome c oxidase subunit 7C"/>
    <property type="match status" value="1"/>
</dbReference>
<dbReference type="Gene3D" id="4.10.49.10">
    <property type="entry name" value="Cytochrome c oxidase subunit VIIc"/>
    <property type="match status" value="1"/>
</dbReference>
<dbReference type="InterPro" id="IPR004202">
    <property type="entry name" value="COX7C/Cox8"/>
</dbReference>
<dbReference type="InterPro" id="IPR036636">
    <property type="entry name" value="COX7C/Cox8_sf"/>
</dbReference>
<dbReference type="PANTHER" id="PTHR13313:SF1">
    <property type="entry name" value="CYTOCHROME C OXIDASE SUBUNIT 7C, MITOCHONDRIAL"/>
    <property type="match status" value="1"/>
</dbReference>
<dbReference type="PANTHER" id="PTHR13313">
    <property type="entry name" value="CYTOCHROME C OXIDASE SUBUNIT VIIC"/>
    <property type="match status" value="1"/>
</dbReference>
<dbReference type="Pfam" id="PF02935">
    <property type="entry name" value="COX7C"/>
    <property type="match status" value="1"/>
</dbReference>
<dbReference type="SUPFAM" id="SSF81427">
    <property type="entry name" value="Mitochondrial cytochrome c oxidase subunit VIIc (aka VIIIa)"/>
    <property type="match status" value="1"/>
</dbReference>
<name>COX7C_PANPA</name>
<organism>
    <name type="scientific">Pan paniscus</name>
    <name type="common">Pygmy chimpanzee</name>
    <name type="synonym">Bonobo</name>
    <dbReference type="NCBI Taxonomy" id="9597"/>
    <lineage>
        <taxon>Eukaryota</taxon>
        <taxon>Metazoa</taxon>
        <taxon>Chordata</taxon>
        <taxon>Craniata</taxon>
        <taxon>Vertebrata</taxon>
        <taxon>Euteleostomi</taxon>
        <taxon>Mammalia</taxon>
        <taxon>Eutheria</taxon>
        <taxon>Euarchontoglires</taxon>
        <taxon>Primates</taxon>
        <taxon>Haplorrhini</taxon>
        <taxon>Catarrhini</taxon>
        <taxon>Hominidae</taxon>
        <taxon>Pan</taxon>
    </lineage>
</organism>
<sequence length="63" mass="7246">MLGQSIRRFTTSVVRRSHYEEGPGKNLPFSVENKWSLLAKMCLYFGSAFATPFLVVRHQLLKT</sequence>
<protein>
    <recommendedName>
        <fullName>Cytochrome c oxidase subunit 7C, mitochondrial</fullName>
    </recommendedName>
    <alternativeName>
        <fullName>Cytochrome c oxidase polypeptide VIIc</fullName>
    </alternativeName>
</protein>
<proteinExistence type="inferred from homology"/>
<feature type="transit peptide" description="Mitochondrion" evidence="1">
    <location>
        <begin position="1"/>
        <end position="16"/>
    </location>
</feature>
<feature type="chain" id="PRO_0000006167" description="Cytochrome c oxidase subunit 7C, mitochondrial">
    <location>
        <begin position="17"/>
        <end position="63"/>
    </location>
</feature>
<feature type="topological domain" description="Mitochondrial matrix" evidence="1">
    <location>
        <begin position="17"/>
        <end position="33"/>
    </location>
</feature>
<feature type="transmembrane region" description="Helical" evidence="1">
    <location>
        <begin position="34"/>
        <end position="60"/>
    </location>
</feature>
<feature type="topological domain" description="Mitochondrial intermembrane" evidence="1">
    <location>
        <begin position="61"/>
        <end position="63"/>
    </location>
</feature>
<feature type="modified residue" description="N6-acetyllysine; alternate" evidence="4">
    <location>
        <position position="25"/>
    </location>
</feature>
<feature type="modified residue" description="N6-succinyllysine; alternate" evidence="4">
    <location>
        <position position="25"/>
    </location>
</feature>
<keyword id="KW-0007">Acetylation</keyword>
<keyword id="KW-0472">Membrane</keyword>
<keyword id="KW-0496">Mitochondrion</keyword>
<keyword id="KW-0999">Mitochondrion inner membrane</keyword>
<keyword id="KW-1185">Reference proteome</keyword>
<keyword id="KW-0809">Transit peptide</keyword>
<keyword id="KW-0812">Transmembrane</keyword>
<keyword id="KW-1133">Transmembrane helix</keyword>
<comment type="function">
    <text evidence="2">Component of the cytochrome c oxidase, the last enzyme in the mitochondrial electron transport chain which drives oxidative phosphorylation. The respiratory chain contains 3 multisubunit complexes succinate dehydrogenase (complex II, CII), ubiquinol-cytochrome c oxidoreductase (cytochrome b-c1 complex, complex III, CIII) and cytochrome c oxidase (complex IV, CIV), that cooperate to transfer electrons derived from NADH and succinate to molecular oxygen, creating an electrochemical gradient over the inner membrane that drives transmembrane transport and the ATP synthase. Cytochrome c oxidase is the component of the respiratory chain that catalyzes the reduction of oxygen to water. Electrons originating from reduced cytochrome c in the intermembrane space (IMS) are transferred via the dinuclear copper A center (CU(A)) of subunit 2 and heme A of subunit 1 to the active site in subunit 1, a binuclear center (BNC) formed by heme A3 and copper B (CU(B)). The BNC reduces molecular oxygen to 2 water molecules using 4 electrons from cytochrome c in the IMS and 4 protons from the mitochondrial matrix.</text>
</comment>
<comment type="pathway">
    <text evidence="2">Energy metabolism; oxidative phosphorylation.</text>
</comment>
<comment type="subunit">
    <text evidence="1 3">Component of the cytochrome c oxidase (complex IV, CIV), a multisubunit enzyme composed of 14 subunits. The complex is composed of a catalytic core of 3 subunits MT-CO1, MT-CO2 and MT-CO3, encoded in the mitochondrial DNA, and 11 supernumerary subunits COX4I, COX5A, COX5B, COX6A, COX6B, COX6C, COX7A, COX7B, COX7C, COX8 and NDUFA4, which are encoded in the nuclear genome. The complex exists as a monomer or a dimer and forms supercomplexes (SCs) in the inner mitochondrial membrane with NADH-ubiquinone oxidoreductase (complex I, CI) and ubiquinol-cytochrome c oxidoreductase (cytochrome b-c1 complex, complex III, CIII), resulting in different assemblies (supercomplex SCI(1)III(2)IV(1) and megacomplex MCI(2)III(2)IV(2)) (By similarity). Interacts with RAB5IF (By similarity).</text>
</comment>
<comment type="subcellular location">
    <subcellularLocation>
        <location evidence="1">Mitochondrion inner membrane</location>
        <topology evidence="1">Single-pass membrane protein</topology>
    </subcellularLocation>
</comment>
<comment type="similarity">
    <text evidence="5">Belongs to the cytochrome c oxidase VIIc family.</text>
</comment>
<reference key="1">
    <citation type="journal article" date="2002" name="Genomics">
        <title>Search for genes positively selected during primate evolution by 5'-end-sequence screening of cynomolgus monkey cDNAs.</title>
        <authorList>
            <person name="Osada N."/>
            <person name="Kusuda J."/>
            <person name="Hirata M."/>
            <person name="Tanuma R."/>
            <person name="Hida M."/>
            <person name="Sugano S."/>
            <person name="Hirai M."/>
            <person name="Hashimoto K."/>
        </authorList>
    </citation>
    <scope>NUCLEOTIDE SEQUENCE [GENOMIC DNA]</scope>
</reference>